<sequence length="493" mass="56218">MDSNCIQFLHDKTILVTGVPGFLAKVFVEKILRIQPKVKKLFLLLRAADNESAMQRFHSEVLEKDLFRVLKNALGDENLKAFITEKVVPIPGDISVDNLGVKGSDLLQHMWNEIDIIVNVAATTNFDERYDVGLSVNTFGPLNVLNFAKKCVKGQLLLHVSTAYVRGEKSGLLHEKTFHMGETLNGHRKLVIETEMELMKQKLKELQKQNCSEEEISQSMKDLGMSRAKLHGWPNTYVFTKSMGEMLLGNYRENLPIVIIRPTMITSTFSEPFPGWIEGLRTIDSVIVAYGKGRLKCFLADPNSVLDLIPVDMVANAMVTAAAIHAGKLGSQTVYHVGSSCKNPITFEQIHDLAASYFTKNPLVRRDGSSILVSKGTILSTMAQFSFYMTLRYKLPLQMLRLIYVIYPWWNGNKYKDIDRKIKLAMRLVDLYRPYVLFKGIFDDTNTEKLRLKRKEINKEMYGLFEFDPKSIDWEDYMTTIHIPGLITYVLKK</sequence>
<gene>
    <name evidence="3" type="primary">FAR4</name>
    <name type="ordered locus">At3g44540</name>
    <name type="ORF">F14L2.90</name>
</gene>
<protein>
    <recommendedName>
        <fullName evidence="6">Probable fatty acyl-CoA reductase 4</fullName>
        <ecNumber evidence="1">1.2.1.84</ecNumber>
    </recommendedName>
</protein>
<name>FACR4_ARATH</name>
<evidence type="ECO:0000269" key="1">
    <source>
    </source>
</evidence>
<evidence type="ECO:0000269" key="2">
    <source>
    </source>
</evidence>
<evidence type="ECO:0000303" key="3">
    <source>
    </source>
</evidence>
<evidence type="ECO:0000303" key="4">
    <source ref="3"/>
</evidence>
<evidence type="ECO:0000303" key="5">
    <source ref="4"/>
</evidence>
<evidence type="ECO:0000305" key="6"/>
<accession>Q9LXN3</accession>
<accession>Q2V3Q9</accession>
<organism>
    <name type="scientific">Arabidopsis thaliana</name>
    <name type="common">Mouse-ear cress</name>
    <dbReference type="NCBI Taxonomy" id="3702"/>
    <lineage>
        <taxon>Eukaryota</taxon>
        <taxon>Viridiplantae</taxon>
        <taxon>Streptophyta</taxon>
        <taxon>Embryophyta</taxon>
        <taxon>Tracheophyta</taxon>
        <taxon>Spermatophyta</taxon>
        <taxon>Magnoliopsida</taxon>
        <taxon>eudicotyledons</taxon>
        <taxon>Gunneridae</taxon>
        <taxon>Pentapetalae</taxon>
        <taxon>rosids</taxon>
        <taxon>malvids</taxon>
        <taxon>Brassicales</taxon>
        <taxon>Brassicaceae</taxon>
        <taxon>Camelineae</taxon>
        <taxon>Arabidopsis</taxon>
    </lineage>
</organism>
<dbReference type="EC" id="1.2.1.84" evidence="1"/>
<dbReference type="EMBL" id="AL353818">
    <property type="protein sequence ID" value="CAB88536.1"/>
    <property type="molecule type" value="Genomic_DNA"/>
</dbReference>
<dbReference type="EMBL" id="CP002686">
    <property type="protein sequence ID" value="AEE77912.1"/>
    <property type="molecule type" value="Genomic_DNA"/>
</dbReference>
<dbReference type="EMBL" id="BT033118">
    <property type="protein sequence ID" value="ACF22894.1"/>
    <property type="molecule type" value="mRNA"/>
</dbReference>
<dbReference type="EMBL" id="AK227396">
    <property type="protein sequence ID" value="BAE99400.1"/>
    <property type="molecule type" value="mRNA"/>
</dbReference>
<dbReference type="PIR" id="T48934">
    <property type="entry name" value="T48934"/>
</dbReference>
<dbReference type="RefSeq" id="NP_190040.3">
    <molecule id="Q9LXN3-1"/>
    <property type="nucleotide sequence ID" value="NM_114322.5"/>
</dbReference>
<dbReference type="SMR" id="Q9LXN3"/>
<dbReference type="FunCoup" id="Q9LXN3">
    <property type="interactions" value="381"/>
</dbReference>
<dbReference type="STRING" id="3702.Q9LXN3"/>
<dbReference type="PaxDb" id="3702-AT3G44540.1"/>
<dbReference type="ProteomicsDB" id="222341">
    <molecule id="Q9LXN3-1"/>
</dbReference>
<dbReference type="EnsemblPlants" id="AT3G44540.1">
    <molecule id="Q9LXN3-1"/>
    <property type="protein sequence ID" value="AT3G44540.1"/>
    <property type="gene ID" value="AT3G44540"/>
</dbReference>
<dbReference type="GeneID" id="823579"/>
<dbReference type="Gramene" id="AT3G44540.1">
    <molecule id="Q9LXN3-1"/>
    <property type="protein sequence ID" value="AT3G44540.1"/>
    <property type="gene ID" value="AT3G44540"/>
</dbReference>
<dbReference type="KEGG" id="ath:AT3G44540"/>
<dbReference type="Araport" id="AT3G44540"/>
<dbReference type="TAIR" id="AT3G44540">
    <property type="gene designation" value="FAR4"/>
</dbReference>
<dbReference type="eggNOG" id="KOG1221">
    <property type="taxonomic scope" value="Eukaryota"/>
</dbReference>
<dbReference type="HOGENOM" id="CLU_024661_4_1_1"/>
<dbReference type="InParanoid" id="Q9LXN3"/>
<dbReference type="OMA" id="TNPITWQ"/>
<dbReference type="PhylomeDB" id="Q9LXN3"/>
<dbReference type="BioCyc" id="ARA:AT3G44540-MONOMER"/>
<dbReference type="BRENDA" id="1.2.1.84">
    <property type="organism ID" value="399"/>
</dbReference>
<dbReference type="BRENDA" id="1.2.1.B25">
    <property type="organism ID" value="399"/>
</dbReference>
<dbReference type="PRO" id="PR:Q9LXN3"/>
<dbReference type="Proteomes" id="UP000006548">
    <property type="component" value="Chromosome 3"/>
</dbReference>
<dbReference type="ExpressionAtlas" id="Q9LXN3">
    <property type="expression patterns" value="baseline and differential"/>
</dbReference>
<dbReference type="GO" id="GO:0102965">
    <property type="term" value="F:alcohol-forming long-chain fatty acyl-CoA reductase activity"/>
    <property type="evidence" value="ECO:0007669"/>
    <property type="project" value="UniProtKB-EC"/>
</dbReference>
<dbReference type="GO" id="GO:0080019">
    <property type="term" value="F:alcohol-forming very long-chain fatty acyl-CoA reductase activity"/>
    <property type="evidence" value="ECO:0007669"/>
    <property type="project" value="InterPro"/>
</dbReference>
<dbReference type="GO" id="GO:0050062">
    <property type="term" value="F:long-chain-fatty-acyl-CoA reductase activity"/>
    <property type="evidence" value="ECO:0000314"/>
    <property type="project" value="TAIR"/>
</dbReference>
<dbReference type="GO" id="GO:0006629">
    <property type="term" value="P:lipid metabolic process"/>
    <property type="evidence" value="ECO:0007669"/>
    <property type="project" value="UniProtKB-KW"/>
</dbReference>
<dbReference type="GO" id="GO:0009651">
    <property type="term" value="P:response to salt stress"/>
    <property type="evidence" value="ECO:0000270"/>
    <property type="project" value="TAIR"/>
</dbReference>
<dbReference type="GO" id="GO:0009611">
    <property type="term" value="P:response to wounding"/>
    <property type="evidence" value="ECO:0000315"/>
    <property type="project" value="TAIR"/>
</dbReference>
<dbReference type="GO" id="GO:0010345">
    <property type="term" value="P:suberin biosynthetic process"/>
    <property type="evidence" value="ECO:0000315"/>
    <property type="project" value="TAIR"/>
</dbReference>
<dbReference type="CDD" id="cd05236">
    <property type="entry name" value="FAR-N_SDR_e"/>
    <property type="match status" value="1"/>
</dbReference>
<dbReference type="CDD" id="cd09071">
    <property type="entry name" value="FAR_C"/>
    <property type="match status" value="1"/>
</dbReference>
<dbReference type="Gene3D" id="3.40.50.720">
    <property type="entry name" value="NAD(P)-binding Rossmann-like Domain"/>
    <property type="match status" value="1"/>
</dbReference>
<dbReference type="InterPro" id="IPR026055">
    <property type="entry name" value="FAR"/>
</dbReference>
<dbReference type="InterPro" id="IPR033640">
    <property type="entry name" value="FAR_C"/>
</dbReference>
<dbReference type="InterPro" id="IPR013120">
    <property type="entry name" value="Far_NAD-bd"/>
</dbReference>
<dbReference type="InterPro" id="IPR036291">
    <property type="entry name" value="NAD(P)-bd_dom_sf"/>
</dbReference>
<dbReference type="PANTHER" id="PTHR11011:SF63">
    <property type="entry name" value="FATTY ACYL-COA REDUCTASE 4-RELATED"/>
    <property type="match status" value="1"/>
</dbReference>
<dbReference type="PANTHER" id="PTHR11011">
    <property type="entry name" value="MALE STERILITY PROTEIN 2-RELATED"/>
    <property type="match status" value="1"/>
</dbReference>
<dbReference type="Pfam" id="PF07993">
    <property type="entry name" value="NAD_binding_4"/>
    <property type="match status" value="1"/>
</dbReference>
<dbReference type="Pfam" id="PF03015">
    <property type="entry name" value="Sterile"/>
    <property type="match status" value="1"/>
</dbReference>
<dbReference type="SUPFAM" id="SSF51735">
    <property type="entry name" value="NAD(P)-binding Rossmann-fold domains"/>
    <property type="match status" value="1"/>
</dbReference>
<reference key="1">
    <citation type="journal article" date="2000" name="Nature">
        <title>Sequence and analysis of chromosome 3 of the plant Arabidopsis thaliana.</title>
        <authorList>
            <person name="Salanoubat M."/>
            <person name="Lemcke K."/>
            <person name="Rieger M."/>
            <person name="Ansorge W."/>
            <person name="Unseld M."/>
            <person name="Fartmann B."/>
            <person name="Valle G."/>
            <person name="Bloecker H."/>
            <person name="Perez-Alonso M."/>
            <person name="Obermaier B."/>
            <person name="Delseny M."/>
            <person name="Boutry M."/>
            <person name="Grivell L.A."/>
            <person name="Mache R."/>
            <person name="Puigdomenech P."/>
            <person name="De Simone V."/>
            <person name="Choisne N."/>
            <person name="Artiguenave F."/>
            <person name="Robert C."/>
            <person name="Brottier P."/>
            <person name="Wincker P."/>
            <person name="Cattolico L."/>
            <person name="Weissenbach J."/>
            <person name="Saurin W."/>
            <person name="Quetier F."/>
            <person name="Schaefer M."/>
            <person name="Mueller-Auer S."/>
            <person name="Gabel C."/>
            <person name="Fuchs M."/>
            <person name="Benes V."/>
            <person name="Wurmbach E."/>
            <person name="Drzonek H."/>
            <person name="Erfle H."/>
            <person name="Jordan N."/>
            <person name="Bangert S."/>
            <person name="Wiedelmann R."/>
            <person name="Kranz H."/>
            <person name="Voss H."/>
            <person name="Holland R."/>
            <person name="Brandt P."/>
            <person name="Nyakatura G."/>
            <person name="Vezzi A."/>
            <person name="D'Angelo M."/>
            <person name="Pallavicini A."/>
            <person name="Toppo S."/>
            <person name="Simionati B."/>
            <person name="Conrad A."/>
            <person name="Hornischer K."/>
            <person name="Kauer G."/>
            <person name="Loehnert T.-H."/>
            <person name="Nordsiek G."/>
            <person name="Reichelt J."/>
            <person name="Scharfe M."/>
            <person name="Schoen O."/>
            <person name="Bargues M."/>
            <person name="Terol J."/>
            <person name="Climent J."/>
            <person name="Navarro P."/>
            <person name="Collado C."/>
            <person name="Perez-Perez A."/>
            <person name="Ottenwaelder B."/>
            <person name="Duchemin D."/>
            <person name="Cooke R."/>
            <person name="Laudie M."/>
            <person name="Berger-Llauro C."/>
            <person name="Purnelle B."/>
            <person name="Masuy D."/>
            <person name="de Haan M."/>
            <person name="Maarse A.C."/>
            <person name="Alcaraz J.-P."/>
            <person name="Cottet A."/>
            <person name="Casacuberta E."/>
            <person name="Monfort A."/>
            <person name="Argiriou A."/>
            <person name="Flores M."/>
            <person name="Liguori R."/>
            <person name="Vitale D."/>
            <person name="Mannhaupt G."/>
            <person name="Haase D."/>
            <person name="Schoof H."/>
            <person name="Rudd S."/>
            <person name="Zaccaria P."/>
            <person name="Mewes H.-W."/>
            <person name="Mayer K.F.X."/>
            <person name="Kaul S."/>
            <person name="Town C.D."/>
            <person name="Koo H.L."/>
            <person name="Tallon L.J."/>
            <person name="Jenkins J."/>
            <person name="Rooney T."/>
            <person name="Rizzo M."/>
            <person name="Walts A."/>
            <person name="Utterback T."/>
            <person name="Fujii C.Y."/>
            <person name="Shea T.P."/>
            <person name="Creasy T.H."/>
            <person name="Haas B."/>
            <person name="Maiti R."/>
            <person name="Wu D."/>
            <person name="Peterson J."/>
            <person name="Van Aken S."/>
            <person name="Pai G."/>
            <person name="Militscher J."/>
            <person name="Sellers P."/>
            <person name="Gill J.E."/>
            <person name="Feldblyum T.V."/>
            <person name="Preuss D."/>
            <person name="Lin X."/>
            <person name="Nierman W.C."/>
            <person name="Salzberg S.L."/>
            <person name="White O."/>
            <person name="Venter J.C."/>
            <person name="Fraser C.M."/>
            <person name="Kaneko T."/>
            <person name="Nakamura Y."/>
            <person name="Sato S."/>
            <person name="Kato T."/>
            <person name="Asamizu E."/>
            <person name="Sasamoto S."/>
            <person name="Kimura T."/>
            <person name="Idesawa K."/>
            <person name="Kawashima K."/>
            <person name="Kishida Y."/>
            <person name="Kiyokawa C."/>
            <person name="Kohara M."/>
            <person name="Matsumoto M."/>
            <person name="Matsuno A."/>
            <person name="Muraki A."/>
            <person name="Nakayama S."/>
            <person name="Nakazaki N."/>
            <person name="Shinpo S."/>
            <person name="Takeuchi C."/>
            <person name="Wada T."/>
            <person name="Watanabe A."/>
            <person name="Yamada M."/>
            <person name="Yasuda M."/>
            <person name="Tabata S."/>
        </authorList>
    </citation>
    <scope>NUCLEOTIDE SEQUENCE [LARGE SCALE GENOMIC DNA]</scope>
    <source>
        <strain>cv. Columbia</strain>
    </source>
</reference>
<reference key="2">
    <citation type="journal article" date="2017" name="Plant J.">
        <title>Araport11: a complete reannotation of the Arabidopsis thaliana reference genome.</title>
        <authorList>
            <person name="Cheng C.Y."/>
            <person name="Krishnakumar V."/>
            <person name="Chan A.P."/>
            <person name="Thibaud-Nissen F."/>
            <person name="Schobel S."/>
            <person name="Town C.D."/>
        </authorList>
    </citation>
    <scope>GENOME REANNOTATION</scope>
    <source>
        <strain>cv. Columbia</strain>
    </source>
</reference>
<reference key="3">
    <citation type="submission" date="2008-07" db="EMBL/GenBank/DDBJ databases">
        <title>Arabidopsis ORF clones.</title>
        <authorList>
            <person name="De Los Reyes C."/>
            <person name="Quan R."/>
            <person name="Chen H."/>
            <person name="Bautista V.R."/>
            <person name="Kim C.J."/>
            <person name="Ecker J.R."/>
        </authorList>
    </citation>
    <scope>NUCLEOTIDE SEQUENCE [LARGE SCALE MRNA] (ISOFORM 2)</scope>
    <source>
        <strain>cv. Columbia</strain>
    </source>
</reference>
<reference key="4">
    <citation type="submission" date="2006-07" db="EMBL/GenBank/DDBJ databases">
        <title>Large-scale analysis of RIKEN Arabidopsis full-length (RAFL) cDNAs.</title>
        <authorList>
            <person name="Totoki Y."/>
            <person name="Seki M."/>
            <person name="Ishida J."/>
            <person name="Nakajima M."/>
            <person name="Enju A."/>
            <person name="Kamiya A."/>
            <person name="Narusaka M."/>
            <person name="Shin-i T."/>
            <person name="Nakagawa M."/>
            <person name="Sakamoto N."/>
            <person name="Oishi K."/>
            <person name="Kohara Y."/>
            <person name="Kobayashi M."/>
            <person name="Toyoda A."/>
            <person name="Sakaki Y."/>
            <person name="Sakurai T."/>
            <person name="Iida K."/>
            <person name="Akiyama K."/>
            <person name="Satou M."/>
            <person name="Toyoda T."/>
            <person name="Konagaya A."/>
            <person name="Carninci P."/>
            <person name="Kawai J."/>
            <person name="Hayashizaki Y."/>
            <person name="Shinozaki K."/>
        </authorList>
    </citation>
    <scope>NUCLEOTIDE SEQUENCE [LARGE SCALE MRNA] (ISOFORM 2)</scope>
    <source>
        <strain>cv. Columbia</strain>
    </source>
</reference>
<reference key="5">
    <citation type="journal article" date="2010" name="Plant Physiol.">
        <title>Three Arabidopsis fatty acyl-coenzyme A reductases, FAR1, FAR4, and FAR5, generate primary fatty alcohols associated with suberin deposition.</title>
        <authorList>
            <person name="Domergue F."/>
            <person name="Vishwanath S.J."/>
            <person name="Joubes J."/>
            <person name="Ono J."/>
            <person name="Lee J.A."/>
            <person name="Bourdon M."/>
            <person name="Alhattab R."/>
            <person name="Lowe C."/>
            <person name="Pascal S."/>
            <person name="Lessire R."/>
            <person name="Rowland O."/>
        </authorList>
    </citation>
    <scope>FUNCTION</scope>
    <scope>CATALYTIC ACTIVITY</scope>
    <scope>TISSUE SPECIFICITY</scope>
    <scope>INDUCTION</scope>
</reference>
<reference key="6">
    <citation type="journal article" date="2012" name="Plant Physiol.">
        <title>Identification of an Arabidopsis fatty alcohol:caffeoyl-Coenzyme A acyltransferase required for the synthesis of alkyl hydroxycinnamates in root waxes.</title>
        <authorList>
            <person name="Kosma D.K."/>
            <person name="Molina I."/>
            <person name="Ohlrogge J.B."/>
            <person name="Pollard M."/>
        </authorList>
    </citation>
    <scope>FUNCTION</scope>
</reference>
<comment type="function">
    <text evidence="1 2">Catalyzes the reduction of fatty acyl-CoA to fatty alcohols (PubMed:20571114). Catalyzes specifically the formation of C18:0 and C20:0 fatty alcohols. Provides the fatty alcohols required for synthesis of suberin in roots, seed coat and wound-induced leaf tissue (PubMed:20571114). Provides the fatty alcohols required for synthesis of alkyl hydroxycinnamates in root waxes (PubMed:22797656).</text>
</comment>
<comment type="catalytic activity">
    <reaction evidence="1">
        <text>a long-chain fatty acyl-CoA + 2 NADPH + 2 H(+) = a long-chain primary fatty alcohol + 2 NADP(+) + CoA</text>
        <dbReference type="Rhea" id="RHEA:52716"/>
        <dbReference type="ChEBI" id="CHEBI:15378"/>
        <dbReference type="ChEBI" id="CHEBI:57287"/>
        <dbReference type="ChEBI" id="CHEBI:57783"/>
        <dbReference type="ChEBI" id="CHEBI:58349"/>
        <dbReference type="ChEBI" id="CHEBI:77396"/>
        <dbReference type="ChEBI" id="CHEBI:83139"/>
        <dbReference type="EC" id="1.2.1.84"/>
    </reaction>
</comment>
<comment type="alternative products">
    <event type="alternative splicing"/>
    <isoform>
        <id>Q9LXN3-1</id>
        <name>1</name>
        <sequence type="displayed"/>
    </isoform>
    <isoform>
        <id>Q9LXN3-2</id>
        <name>2</name>
        <sequence type="described" ref="VSP_037566 VSP_037567"/>
    </isoform>
</comment>
<comment type="tissue specificity">
    <text evidence="1">Expressed in the endodermal cell layer surrounding the central vasculature in roots. Expressed in the hilum region of seeds. Expressed in stamen filaments and receptacle of siliques.</text>
</comment>
<comment type="induction">
    <text evidence="1">Induced by wounding and salt stress.</text>
</comment>
<comment type="similarity">
    <text evidence="6">Belongs to the fatty acyl-CoA reductase family.</text>
</comment>
<proteinExistence type="evidence at protein level"/>
<keyword id="KW-0025">Alternative splicing</keyword>
<keyword id="KW-0444">Lipid biosynthesis</keyword>
<keyword id="KW-0443">Lipid metabolism</keyword>
<keyword id="KW-0521">NADP</keyword>
<keyword id="KW-0560">Oxidoreductase</keyword>
<keyword id="KW-1185">Reference proteome</keyword>
<feature type="chain" id="PRO_0000378344" description="Probable fatty acyl-CoA reductase 4">
    <location>
        <begin position="1"/>
        <end position="493"/>
    </location>
</feature>
<feature type="splice variant" id="VSP_037566" description="In isoform 2." evidence="4 5">
    <original>MLRLIYVIYPWWNGNKYKDIDRKIKLAMRLVDLYR</original>
    <variation>TLTARLSWRCGWSTSTDLMSCLRAYLTIRILRNCG</variation>
    <location>
        <begin position="399"/>
        <end position="433"/>
    </location>
</feature>
<feature type="splice variant" id="VSP_037567" description="In isoform 2." evidence="4 5">
    <location>
        <begin position="434"/>
        <end position="493"/>
    </location>
</feature>